<feature type="chain" id="PRO_0000353311" description="DNA-directed RNA polymerase subunit beta'">
    <location>
        <begin position="1"/>
        <end position="1412"/>
    </location>
</feature>
<feature type="region of interest" description="Disordered" evidence="2">
    <location>
        <begin position="1393"/>
        <end position="1412"/>
    </location>
</feature>
<feature type="binding site" evidence="1">
    <location>
        <position position="70"/>
    </location>
    <ligand>
        <name>Zn(2+)</name>
        <dbReference type="ChEBI" id="CHEBI:29105"/>
        <label>1</label>
    </ligand>
</feature>
<feature type="binding site" evidence="1">
    <location>
        <position position="72"/>
    </location>
    <ligand>
        <name>Zn(2+)</name>
        <dbReference type="ChEBI" id="CHEBI:29105"/>
        <label>1</label>
    </ligand>
</feature>
<feature type="binding site" evidence="1">
    <location>
        <position position="85"/>
    </location>
    <ligand>
        <name>Zn(2+)</name>
        <dbReference type="ChEBI" id="CHEBI:29105"/>
        <label>1</label>
    </ligand>
</feature>
<feature type="binding site" evidence="1">
    <location>
        <position position="88"/>
    </location>
    <ligand>
        <name>Zn(2+)</name>
        <dbReference type="ChEBI" id="CHEBI:29105"/>
        <label>1</label>
    </ligand>
</feature>
<feature type="binding site" evidence="1">
    <location>
        <position position="460"/>
    </location>
    <ligand>
        <name>Mg(2+)</name>
        <dbReference type="ChEBI" id="CHEBI:18420"/>
    </ligand>
</feature>
<feature type="binding site" evidence="1">
    <location>
        <position position="462"/>
    </location>
    <ligand>
        <name>Mg(2+)</name>
        <dbReference type="ChEBI" id="CHEBI:18420"/>
    </ligand>
</feature>
<feature type="binding site" evidence="1">
    <location>
        <position position="464"/>
    </location>
    <ligand>
        <name>Mg(2+)</name>
        <dbReference type="ChEBI" id="CHEBI:18420"/>
    </ligand>
</feature>
<feature type="binding site" evidence="1">
    <location>
        <position position="819"/>
    </location>
    <ligand>
        <name>Zn(2+)</name>
        <dbReference type="ChEBI" id="CHEBI:29105"/>
        <label>2</label>
    </ligand>
</feature>
<feature type="binding site" evidence="1">
    <location>
        <position position="893"/>
    </location>
    <ligand>
        <name>Zn(2+)</name>
        <dbReference type="ChEBI" id="CHEBI:29105"/>
        <label>2</label>
    </ligand>
</feature>
<feature type="binding site" evidence="1">
    <location>
        <position position="900"/>
    </location>
    <ligand>
        <name>Zn(2+)</name>
        <dbReference type="ChEBI" id="CHEBI:29105"/>
        <label>2</label>
    </ligand>
</feature>
<feature type="binding site" evidence="1">
    <location>
        <position position="903"/>
    </location>
    <ligand>
        <name>Zn(2+)</name>
        <dbReference type="ChEBI" id="CHEBI:29105"/>
        <label>2</label>
    </ligand>
</feature>
<name>RPOC_BURMS</name>
<proteinExistence type="inferred from homology"/>
<evidence type="ECO:0000255" key="1">
    <source>
        <dbReference type="HAMAP-Rule" id="MF_01322"/>
    </source>
</evidence>
<evidence type="ECO:0000256" key="2">
    <source>
        <dbReference type="SAM" id="MobiDB-lite"/>
    </source>
</evidence>
<accession>A1V8B1</accession>
<gene>
    <name evidence="1" type="primary">rpoC</name>
    <name type="ordered locus">BMASAVP1_A3177</name>
</gene>
<dbReference type="EC" id="2.7.7.6" evidence="1"/>
<dbReference type="EMBL" id="CP000526">
    <property type="protein sequence ID" value="ABM50613.1"/>
    <property type="molecule type" value="Genomic_DNA"/>
</dbReference>
<dbReference type="RefSeq" id="WP_004198364.1">
    <property type="nucleotide sequence ID" value="NC_008785.1"/>
</dbReference>
<dbReference type="SMR" id="A1V8B1"/>
<dbReference type="GeneID" id="92980327"/>
<dbReference type="KEGG" id="bmv:BMASAVP1_A3177"/>
<dbReference type="HOGENOM" id="CLU_000524_3_1_4"/>
<dbReference type="GO" id="GO:0000428">
    <property type="term" value="C:DNA-directed RNA polymerase complex"/>
    <property type="evidence" value="ECO:0007669"/>
    <property type="project" value="UniProtKB-KW"/>
</dbReference>
<dbReference type="GO" id="GO:0003677">
    <property type="term" value="F:DNA binding"/>
    <property type="evidence" value="ECO:0007669"/>
    <property type="project" value="UniProtKB-UniRule"/>
</dbReference>
<dbReference type="GO" id="GO:0003899">
    <property type="term" value="F:DNA-directed RNA polymerase activity"/>
    <property type="evidence" value="ECO:0007669"/>
    <property type="project" value="UniProtKB-UniRule"/>
</dbReference>
<dbReference type="GO" id="GO:0000287">
    <property type="term" value="F:magnesium ion binding"/>
    <property type="evidence" value="ECO:0007669"/>
    <property type="project" value="UniProtKB-UniRule"/>
</dbReference>
<dbReference type="GO" id="GO:0008270">
    <property type="term" value="F:zinc ion binding"/>
    <property type="evidence" value="ECO:0007669"/>
    <property type="project" value="UniProtKB-UniRule"/>
</dbReference>
<dbReference type="GO" id="GO:0006351">
    <property type="term" value="P:DNA-templated transcription"/>
    <property type="evidence" value="ECO:0007669"/>
    <property type="project" value="UniProtKB-UniRule"/>
</dbReference>
<dbReference type="CDD" id="cd02655">
    <property type="entry name" value="RNAP_beta'_C"/>
    <property type="match status" value="1"/>
</dbReference>
<dbReference type="CDD" id="cd01609">
    <property type="entry name" value="RNAP_beta'_N"/>
    <property type="match status" value="1"/>
</dbReference>
<dbReference type="FunFam" id="1.10.132.30:FF:000003">
    <property type="entry name" value="DNA-directed RNA polymerase subunit beta"/>
    <property type="match status" value="1"/>
</dbReference>
<dbReference type="FunFam" id="1.10.150.390:FF:000002">
    <property type="entry name" value="DNA-directed RNA polymerase subunit beta"/>
    <property type="match status" value="1"/>
</dbReference>
<dbReference type="FunFam" id="4.10.860.120:FF:000001">
    <property type="entry name" value="DNA-directed RNA polymerase subunit beta"/>
    <property type="match status" value="1"/>
</dbReference>
<dbReference type="Gene3D" id="1.10.132.30">
    <property type="match status" value="1"/>
</dbReference>
<dbReference type="Gene3D" id="1.10.150.390">
    <property type="match status" value="1"/>
</dbReference>
<dbReference type="Gene3D" id="1.10.1790.20">
    <property type="match status" value="1"/>
</dbReference>
<dbReference type="Gene3D" id="1.10.40.90">
    <property type="match status" value="1"/>
</dbReference>
<dbReference type="Gene3D" id="2.40.40.20">
    <property type="match status" value="1"/>
</dbReference>
<dbReference type="Gene3D" id="2.40.50.100">
    <property type="match status" value="3"/>
</dbReference>
<dbReference type="Gene3D" id="4.10.860.120">
    <property type="entry name" value="RNA polymerase II, clamp domain"/>
    <property type="match status" value="1"/>
</dbReference>
<dbReference type="Gene3D" id="1.10.274.100">
    <property type="entry name" value="RNA polymerase Rpb1, domain 3"/>
    <property type="match status" value="1"/>
</dbReference>
<dbReference type="HAMAP" id="MF_01322">
    <property type="entry name" value="RNApol_bact_RpoC"/>
    <property type="match status" value="1"/>
</dbReference>
<dbReference type="InterPro" id="IPR045867">
    <property type="entry name" value="DNA-dir_RpoC_beta_prime"/>
</dbReference>
<dbReference type="InterPro" id="IPR012754">
    <property type="entry name" value="DNA-dir_RpoC_beta_prime_bact"/>
</dbReference>
<dbReference type="InterPro" id="IPR000722">
    <property type="entry name" value="RNA_pol_asu"/>
</dbReference>
<dbReference type="InterPro" id="IPR006592">
    <property type="entry name" value="RNA_pol_N"/>
</dbReference>
<dbReference type="InterPro" id="IPR007080">
    <property type="entry name" value="RNA_pol_Rpb1_1"/>
</dbReference>
<dbReference type="InterPro" id="IPR007066">
    <property type="entry name" value="RNA_pol_Rpb1_3"/>
</dbReference>
<dbReference type="InterPro" id="IPR042102">
    <property type="entry name" value="RNA_pol_Rpb1_3_sf"/>
</dbReference>
<dbReference type="InterPro" id="IPR007083">
    <property type="entry name" value="RNA_pol_Rpb1_4"/>
</dbReference>
<dbReference type="InterPro" id="IPR007081">
    <property type="entry name" value="RNA_pol_Rpb1_5"/>
</dbReference>
<dbReference type="InterPro" id="IPR044893">
    <property type="entry name" value="RNA_pol_Rpb1_clamp_domain"/>
</dbReference>
<dbReference type="InterPro" id="IPR038120">
    <property type="entry name" value="Rpb1_funnel_sf"/>
</dbReference>
<dbReference type="NCBIfam" id="TIGR02386">
    <property type="entry name" value="rpoC_TIGR"/>
    <property type="match status" value="1"/>
</dbReference>
<dbReference type="PANTHER" id="PTHR19376">
    <property type="entry name" value="DNA-DIRECTED RNA POLYMERASE"/>
    <property type="match status" value="1"/>
</dbReference>
<dbReference type="PANTHER" id="PTHR19376:SF54">
    <property type="entry name" value="DNA-DIRECTED RNA POLYMERASE SUBUNIT BETA"/>
    <property type="match status" value="1"/>
</dbReference>
<dbReference type="Pfam" id="PF04997">
    <property type="entry name" value="RNA_pol_Rpb1_1"/>
    <property type="match status" value="1"/>
</dbReference>
<dbReference type="Pfam" id="PF00623">
    <property type="entry name" value="RNA_pol_Rpb1_2"/>
    <property type="match status" value="2"/>
</dbReference>
<dbReference type="Pfam" id="PF04983">
    <property type="entry name" value="RNA_pol_Rpb1_3"/>
    <property type="match status" value="1"/>
</dbReference>
<dbReference type="Pfam" id="PF05000">
    <property type="entry name" value="RNA_pol_Rpb1_4"/>
    <property type="match status" value="1"/>
</dbReference>
<dbReference type="Pfam" id="PF04998">
    <property type="entry name" value="RNA_pol_Rpb1_5"/>
    <property type="match status" value="1"/>
</dbReference>
<dbReference type="SMART" id="SM00663">
    <property type="entry name" value="RPOLA_N"/>
    <property type="match status" value="1"/>
</dbReference>
<dbReference type="SUPFAM" id="SSF64484">
    <property type="entry name" value="beta and beta-prime subunits of DNA dependent RNA-polymerase"/>
    <property type="match status" value="1"/>
</dbReference>
<protein>
    <recommendedName>
        <fullName evidence="1">DNA-directed RNA polymerase subunit beta'</fullName>
        <shortName evidence="1">RNAP subunit beta'</shortName>
        <ecNumber evidence="1">2.7.7.6</ecNumber>
    </recommendedName>
    <alternativeName>
        <fullName evidence="1">RNA polymerase subunit beta'</fullName>
    </alternativeName>
    <alternativeName>
        <fullName evidence="1">Transcriptase subunit beta'</fullName>
    </alternativeName>
</protein>
<keyword id="KW-0240">DNA-directed RNA polymerase</keyword>
<keyword id="KW-0460">Magnesium</keyword>
<keyword id="KW-0479">Metal-binding</keyword>
<keyword id="KW-0548">Nucleotidyltransferase</keyword>
<keyword id="KW-0804">Transcription</keyword>
<keyword id="KW-0808">Transferase</keyword>
<keyword id="KW-0862">Zinc</keyword>
<comment type="function">
    <text evidence="1">DNA-dependent RNA polymerase catalyzes the transcription of DNA into RNA using the four ribonucleoside triphosphates as substrates.</text>
</comment>
<comment type="catalytic activity">
    <reaction evidence="1">
        <text>RNA(n) + a ribonucleoside 5'-triphosphate = RNA(n+1) + diphosphate</text>
        <dbReference type="Rhea" id="RHEA:21248"/>
        <dbReference type="Rhea" id="RHEA-COMP:14527"/>
        <dbReference type="Rhea" id="RHEA-COMP:17342"/>
        <dbReference type="ChEBI" id="CHEBI:33019"/>
        <dbReference type="ChEBI" id="CHEBI:61557"/>
        <dbReference type="ChEBI" id="CHEBI:140395"/>
        <dbReference type="EC" id="2.7.7.6"/>
    </reaction>
</comment>
<comment type="cofactor">
    <cofactor evidence="1">
        <name>Mg(2+)</name>
        <dbReference type="ChEBI" id="CHEBI:18420"/>
    </cofactor>
    <text evidence="1">Binds 1 Mg(2+) ion per subunit.</text>
</comment>
<comment type="cofactor">
    <cofactor evidence="1">
        <name>Zn(2+)</name>
        <dbReference type="ChEBI" id="CHEBI:29105"/>
    </cofactor>
    <text evidence="1">Binds 2 Zn(2+) ions per subunit.</text>
</comment>
<comment type="subunit">
    <text evidence="1">The RNAP catalytic core consists of 2 alpha, 1 beta, 1 beta' and 1 omega subunit. When a sigma factor is associated with the core the holoenzyme is formed, which can initiate transcription.</text>
</comment>
<comment type="similarity">
    <text evidence="1">Belongs to the RNA polymerase beta' chain family.</text>
</comment>
<reference key="1">
    <citation type="journal article" date="2010" name="Genome Biol. Evol.">
        <title>Continuing evolution of Burkholderia mallei through genome reduction and large-scale rearrangements.</title>
        <authorList>
            <person name="Losada L."/>
            <person name="Ronning C.M."/>
            <person name="DeShazer D."/>
            <person name="Woods D."/>
            <person name="Fedorova N."/>
            <person name="Kim H.S."/>
            <person name="Shabalina S.A."/>
            <person name="Pearson T.R."/>
            <person name="Brinkac L."/>
            <person name="Tan P."/>
            <person name="Nandi T."/>
            <person name="Crabtree J."/>
            <person name="Badger J."/>
            <person name="Beckstrom-Sternberg S."/>
            <person name="Saqib M."/>
            <person name="Schutzer S.E."/>
            <person name="Keim P."/>
            <person name="Nierman W.C."/>
        </authorList>
    </citation>
    <scope>NUCLEOTIDE SEQUENCE [LARGE SCALE GENOMIC DNA]</scope>
    <source>
        <strain>SAVP1</strain>
    </source>
</reference>
<sequence>MKALLDLFKQVQQEEIFDAIKIGLASPDKIRSWSFGEVKKPETINYRTFKPERDGLFCAKIFGPIKDYECLCGKYKRLKHRGVICEKCGVEVTLAKVRRERMGHIELASPVAHIWFLKSLPSRLGMVLDMTLRDIERVLYFEAYVVIDPGMTPLKARQIMTEEDYYNKVEEYGDEFRAEMGAEGVRELLRSINIDEQVETLRTELKNTGSEAKIKKYAKRLKVLEAFQRSGIKPDWMILEVLPVLPPELRPLVPLDGGRFATSDLNDLYRRVINRNNRLKRLLELKAPEIIVRNEKRMLQEAVDSLLDNGRRGKAMTGANKRPLKSLADMIKGKGGRFRQNLLGKRVDYSGRSVIVVGPTLKLHQCGLPKLMALELFKPFIFNKLEVMGVATTIKAAKKEVENQTPVVWDILEEVIREHPVMLNRAPTLHRLGIQAFEPVLIEGKAIQLHPLVCAAFNADFDGDQMAVHVPLSLEAQMEARTLMLASNNVLFPANGDPSIVPSQDIVLGLYYATREAINGKGEGLSFTGVSEVIRAYENKEVELASRVNVRITEMVRNEDTSEGAPQFVPKISLYATTVGRAILSEILPPGLPFSVLNKPLKKKEISRLINTAFRKCGLRATVVFADQLMQSGFRLATRAGISICVDDMLVPTQKETIVGDAAKKVKEYDRQYMSGLVTAQERYNNVVDIWSATSEAVGKAMMEQLSTEPVIDRGGNETRQESFNSIYMMADSGARGSAVQIRQLAGMRGLMAKPDGSIIETPITANFREGLNVLQYFISTHGARKGLADTALKTANSGYLTRRLVDVTQDLVVVEDDCGTSNGVAMKALVEGGEVVEALRDRILGRVAASDVVNPETQETLYEAGALLDETAVEDIERLGIDEVRVRTALTCETRYGLCASCYGRDLGRGSLVNVGEAVGVIAAQSIGEPGTQLTMRTFHIGGAASRAAVASSVEAKSNGTVRFTASMRYVTNAKGEQIVISRSGEALITDDIGRERERHKIPYGATLLQLDGAAIKAGTQLATWDPLTRPIITEYGGTVKFENVEEGVTVAKQIDDVTGLSTLVVIDVKRRGSQAAKSVRPQVKLLDANGDEVKIPGTEHAVQIGFQVGALITVKDGQQVQVGEVLARIPTESQKTRDITGGLPRVAELFEARSPKDAGILAEVTGTVSFGKDTKGKQRLVITDLEGNQHEFLIAKEKQVLVHDGQVVNKGEMIVDGPADPHDILRLQGIEALSRYIVDEVQDVYRLQGVKINDKHIEVIVRQMLRRVQIVDNGDTRFIPGEQVERSDMLDENDRMIAEDKRPATYDNILLGITKASLSTDSFISAASFQETTRVLTEAAIMGKRDDLRGLKENVIVGRLIPAGTGLAFHKARKAKEQSDRERFDQIAAEEAFEFGTPSAPAEEPQHPAE</sequence>
<organism>
    <name type="scientific">Burkholderia mallei (strain SAVP1)</name>
    <dbReference type="NCBI Taxonomy" id="320388"/>
    <lineage>
        <taxon>Bacteria</taxon>
        <taxon>Pseudomonadati</taxon>
        <taxon>Pseudomonadota</taxon>
        <taxon>Betaproteobacteria</taxon>
        <taxon>Burkholderiales</taxon>
        <taxon>Burkholderiaceae</taxon>
        <taxon>Burkholderia</taxon>
        <taxon>pseudomallei group</taxon>
    </lineage>
</organism>